<proteinExistence type="inferred from homology"/>
<keyword id="KW-0963">Cytoplasm</keyword>
<keyword id="KW-0444">Lipid biosynthesis</keyword>
<keyword id="KW-0443">Lipid metabolism</keyword>
<keyword id="KW-0520">NAD</keyword>
<keyword id="KW-0521">NADP</keyword>
<keyword id="KW-0547">Nucleotide-binding</keyword>
<keyword id="KW-0560">Oxidoreductase</keyword>
<keyword id="KW-0594">Phospholipid biosynthesis</keyword>
<keyword id="KW-1208">Phospholipid metabolism</keyword>
<keyword id="KW-1185">Reference proteome</keyword>
<protein>
    <recommendedName>
        <fullName evidence="1">Glycerol-3-phosphate dehydrogenase [NAD(P)+]</fullName>
        <ecNumber evidence="1">1.1.1.94</ecNumber>
    </recommendedName>
    <alternativeName>
        <fullName evidence="1">NAD(P)(+)-dependent glycerol-3-phosphate dehydrogenase</fullName>
    </alternativeName>
    <alternativeName>
        <fullName evidence="1">NAD(P)H-dependent dihydroxyacetone-phosphate reductase</fullName>
    </alternativeName>
</protein>
<reference key="1">
    <citation type="journal article" date="2002" name="Proc. Natl. Acad. Sci. U.S.A.">
        <title>Extensive mosaic structure revealed by the complete genome sequence of uropathogenic Escherichia coli.</title>
        <authorList>
            <person name="Welch R.A."/>
            <person name="Burland V."/>
            <person name="Plunkett G. III"/>
            <person name="Redford P."/>
            <person name="Roesch P."/>
            <person name="Rasko D."/>
            <person name="Buckles E.L."/>
            <person name="Liou S.-R."/>
            <person name="Boutin A."/>
            <person name="Hackett J."/>
            <person name="Stroud D."/>
            <person name="Mayhew G.F."/>
            <person name="Rose D.J."/>
            <person name="Zhou S."/>
            <person name="Schwartz D.C."/>
            <person name="Perna N.T."/>
            <person name="Mobley H.L.T."/>
            <person name="Donnenberg M.S."/>
            <person name="Blattner F.R."/>
        </authorList>
    </citation>
    <scope>NUCLEOTIDE SEQUENCE [LARGE SCALE GENOMIC DNA]</scope>
    <source>
        <strain>CFT073 / ATCC 700928 / UPEC</strain>
    </source>
</reference>
<organism>
    <name type="scientific">Escherichia coli O6:H1 (strain CFT073 / ATCC 700928 / UPEC)</name>
    <dbReference type="NCBI Taxonomy" id="199310"/>
    <lineage>
        <taxon>Bacteria</taxon>
        <taxon>Pseudomonadati</taxon>
        <taxon>Pseudomonadota</taxon>
        <taxon>Gammaproteobacteria</taxon>
        <taxon>Enterobacterales</taxon>
        <taxon>Enterobacteriaceae</taxon>
        <taxon>Escherichia</taxon>
    </lineage>
</organism>
<feature type="chain" id="PRO_0000137958" description="Glycerol-3-phosphate dehydrogenase [NAD(P)+]">
    <location>
        <begin position="1"/>
        <end position="339"/>
    </location>
</feature>
<feature type="active site" description="Proton acceptor" evidence="1">
    <location>
        <position position="195"/>
    </location>
</feature>
<feature type="binding site" evidence="1">
    <location>
        <position position="15"/>
    </location>
    <ligand>
        <name>NADPH</name>
        <dbReference type="ChEBI" id="CHEBI:57783"/>
    </ligand>
</feature>
<feature type="binding site" evidence="1">
    <location>
        <position position="16"/>
    </location>
    <ligand>
        <name>NADPH</name>
        <dbReference type="ChEBI" id="CHEBI:57783"/>
    </ligand>
</feature>
<feature type="binding site" evidence="1">
    <location>
        <position position="36"/>
    </location>
    <ligand>
        <name>NADPH</name>
        <dbReference type="ChEBI" id="CHEBI:57783"/>
    </ligand>
</feature>
<feature type="binding site" evidence="1">
    <location>
        <position position="110"/>
    </location>
    <ligand>
        <name>NADPH</name>
        <dbReference type="ChEBI" id="CHEBI:57783"/>
    </ligand>
</feature>
<feature type="binding site" evidence="1">
    <location>
        <position position="110"/>
    </location>
    <ligand>
        <name>sn-glycerol 3-phosphate</name>
        <dbReference type="ChEBI" id="CHEBI:57597"/>
    </ligand>
</feature>
<feature type="binding site" evidence="1">
    <location>
        <position position="139"/>
    </location>
    <ligand>
        <name>sn-glycerol 3-phosphate</name>
        <dbReference type="ChEBI" id="CHEBI:57597"/>
    </ligand>
</feature>
<feature type="binding site" evidence="1">
    <location>
        <position position="141"/>
    </location>
    <ligand>
        <name>sn-glycerol 3-phosphate</name>
        <dbReference type="ChEBI" id="CHEBI:57597"/>
    </ligand>
</feature>
<feature type="binding site" evidence="1">
    <location>
        <position position="143"/>
    </location>
    <ligand>
        <name>NADPH</name>
        <dbReference type="ChEBI" id="CHEBI:57783"/>
    </ligand>
</feature>
<feature type="binding site" evidence="1">
    <location>
        <position position="195"/>
    </location>
    <ligand>
        <name>sn-glycerol 3-phosphate</name>
        <dbReference type="ChEBI" id="CHEBI:57597"/>
    </ligand>
</feature>
<feature type="binding site" evidence="1">
    <location>
        <position position="248"/>
    </location>
    <ligand>
        <name>sn-glycerol 3-phosphate</name>
        <dbReference type="ChEBI" id="CHEBI:57597"/>
    </ligand>
</feature>
<feature type="binding site" evidence="1">
    <location>
        <position position="258"/>
    </location>
    <ligand>
        <name>sn-glycerol 3-phosphate</name>
        <dbReference type="ChEBI" id="CHEBI:57597"/>
    </ligand>
</feature>
<feature type="binding site" evidence="1">
    <location>
        <position position="259"/>
    </location>
    <ligand>
        <name>NADPH</name>
        <dbReference type="ChEBI" id="CHEBI:57783"/>
    </ligand>
</feature>
<feature type="binding site" evidence="1">
    <location>
        <position position="259"/>
    </location>
    <ligand>
        <name>sn-glycerol 3-phosphate</name>
        <dbReference type="ChEBI" id="CHEBI:57597"/>
    </ligand>
</feature>
<feature type="binding site" evidence="1">
    <location>
        <position position="260"/>
    </location>
    <ligand>
        <name>sn-glycerol 3-phosphate</name>
        <dbReference type="ChEBI" id="CHEBI:57597"/>
    </ligand>
</feature>
<feature type="binding site" evidence="1">
    <location>
        <position position="283"/>
    </location>
    <ligand>
        <name>NADPH</name>
        <dbReference type="ChEBI" id="CHEBI:57783"/>
    </ligand>
</feature>
<feature type="binding site" evidence="1">
    <location>
        <position position="285"/>
    </location>
    <ligand>
        <name>NADPH</name>
        <dbReference type="ChEBI" id="CHEBI:57783"/>
    </ligand>
</feature>
<sequence>MNQRNASMTVIGAGSYGTALAITLARNGHEVVLWGHDPEHIATLERDRCNAAFLPDVPFPDTLHLESDLATALAASRNILVVVPSHVFGEVLRQIKPLMRPDARLVWATKGLEAETGRLLQDVAREALGDQIPLAVISGPTFAKELAAGLPTAISLASTDQTFADDLQQLLHCGKSFRVYSNPDFIGVQLGGAVKNVIAIGAGMSDGIGFGANARTALITRGLAEMSRLGAALGADPATFMGMAGLGDLVLTCTDNQSRNRRFGMMLGQGMDVQSAQEKIGQVVEGYRNTKEVRELAHRFGVEMPITEEIYQVLYCGKNAREAALTLLGRARKDERSSH</sequence>
<gene>
    <name evidence="1" type="primary">gpsA</name>
    <name type="ordered locus">c4430</name>
</gene>
<evidence type="ECO:0000255" key="1">
    <source>
        <dbReference type="HAMAP-Rule" id="MF_00394"/>
    </source>
</evidence>
<accession>P0A6S8</accession>
<accession>P37606</accession>
<comment type="function">
    <text evidence="1">Catalyzes the reduction of the glycolytic intermediate dihydroxyacetone phosphate (DHAP) to sn-glycerol 3-phosphate (G3P), the key precursor for phospholipid synthesis.</text>
</comment>
<comment type="catalytic activity">
    <reaction evidence="1">
        <text>sn-glycerol 3-phosphate + NAD(+) = dihydroxyacetone phosphate + NADH + H(+)</text>
        <dbReference type="Rhea" id="RHEA:11092"/>
        <dbReference type="ChEBI" id="CHEBI:15378"/>
        <dbReference type="ChEBI" id="CHEBI:57540"/>
        <dbReference type="ChEBI" id="CHEBI:57597"/>
        <dbReference type="ChEBI" id="CHEBI:57642"/>
        <dbReference type="ChEBI" id="CHEBI:57945"/>
        <dbReference type="EC" id="1.1.1.94"/>
    </reaction>
    <physiologicalReaction direction="right-to-left" evidence="1">
        <dbReference type="Rhea" id="RHEA:11094"/>
    </physiologicalReaction>
</comment>
<comment type="catalytic activity">
    <reaction evidence="1">
        <text>sn-glycerol 3-phosphate + NADP(+) = dihydroxyacetone phosphate + NADPH + H(+)</text>
        <dbReference type="Rhea" id="RHEA:11096"/>
        <dbReference type="ChEBI" id="CHEBI:15378"/>
        <dbReference type="ChEBI" id="CHEBI:57597"/>
        <dbReference type="ChEBI" id="CHEBI:57642"/>
        <dbReference type="ChEBI" id="CHEBI:57783"/>
        <dbReference type="ChEBI" id="CHEBI:58349"/>
        <dbReference type="EC" id="1.1.1.94"/>
    </reaction>
    <physiologicalReaction direction="right-to-left" evidence="1">
        <dbReference type="Rhea" id="RHEA:11098"/>
    </physiologicalReaction>
</comment>
<comment type="pathway">
    <text evidence="1">Membrane lipid metabolism; glycerophospholipid metabolism.</text>
</comment>
<comment type="subcellular location">
    <subcellularLocation>
        <location evidence="1">Cytoplasm</location>
    </subcellularLocation>
</comment>
<comment type="similarity">
    <text evidence="1">Belongs to the NAD-dependent glycerol-3-phosphate dehydrogenase family.</text>
</comment>
<dbReference type="EC" id="1.1.1.94" evidence="1"/>
<dbReference type="EMBL" id="AE014075">
    <property type="protein sequence ID" value="AAN82866.1"/>
    <property type="molecule type" value="Genomic_DNA"/>
</dbReference>
<dbReference type="RefSeq" id="WP_001076194.1">
    <property type="nucleotide sequence ID" value="NZ_CP051263.1"/>
</dbReference>
<dbReference type="SMR" id="P0A6S8"/>
<dbReference type="STRING" id="199310.c4430"/>
<dbReference type="GeneID" id="93778322"/>
<dbReference type="KEGG" id="ecc:c4430"/>
<dbReference type="eggNOG" id="COG0240">
    <property type="taxonomic scope" value="Bacteria"/>
</dbReference>
<dbReference type="HOGENOM" id="CLU_033449_0_2_6"/>
<dbReference type="BioCyc" id="ECOL199310:C4430-MONOMER"/>
<dbReference type="UniPathway" id="UPA00940"/>
<dbReference type="Proteomes" id="UP000001410">
    <property type="component" value="Chromosome"/>
</dbReference>
<dbReference type="GO" id="GO:0005829">
    <property type="term" value="C:cytosol"/>
    <property type="evidence" value="ECO:0007669"/>
    <property type="project" value="TreeGrafter"/>
</dbReference>
<dbReference type="GO" id="GO:0047952">
    <property type="term" value="F:glycerol-3-phosphate dehydrogenase [NAD(P)+] activity"/>
    <property type="evidence" value="ECO:0007669"/>
    <property type="project" value="UniProtKB-UniRule"/>
</dbReference>
<dbReference type="GO" id="GO:0051287">
    <property type="term" value="F:NAD binding"/>
    <property type="evidence" value="ECO:0007669"/>
    <property type="project" value="InterPro"/>
</dbReference>
<dbReference type="GO" id="GO:0005975">
    <property type="term" value="P:carbohydrate metabolic process"/>
    <property type="evidence" value="ECO:0007669"/>
    <property type="project" value="InterPro"/>
</dbReference>
<dbReference type="GO" id="GO:0046167">
    <property type="term" value="P:glycerol-3-phosphate biosynthetic process"/>
    <property type="evidence" value="ECO:0007669"/>
    <property type="project" value="UniProtKB-UniRule"/>
</dbReference>
<dbReference type="GO" id="GO:0046168">
    <property type="term" value="P:glycerol-3-phosphate catabolic process"/>
    <property type="evidence" value="ECO:0007669"/>
    <property type="project" value="InterPro"/>
</dbReference>
<dbReference type="GO" id="GO:0046474">
    <property type="term" value="P:glycerophospholipid biosynthetic process"/>
    <property type="evidence" value="ECO:0007669"/>
    <property type="project" value="TreeGrafter"/>
</dbReference>
<dbReference type="FunFam" id="1.10.1040.10:FF:000001">
    <property type="entry name" value="Glycerol-3-phosphate dehydrogenase [NAD(P)+]"/>
    <property type="match status" value="1"/>
</dbReference>
<dbReference type="FunFam" id="3.40.50.720:FF:000019">
    <property type="entry name" value="Glycerol-3-phosphate dehydrogenase [NAD(P)+]"/>
    <property type="match status" value="1"/>
</dbReference>
<dbReference type="Gene3D" id="1.10.1040.10">
    <property type="entry name" value="N-(1-d-carboxylethyl)-l-norvaline Dehydrogenase, domain 2"/>
    <property type="match status" value="1"/>
</dbReference>
<dbReference type="Gene3D" id="3.40.50.720">
    <property type="entry name" value="NAD(P)-binding Rossmann-like Domain"/>
    <property type="match status" value="1"/>
</dbReference>
<dbReference type="HAMAP" id="MF_00394">
    <property type="entry name" value="NAD_Glyc3P_dehydrog"/>
    <property type="match status" value="1"/>
</dbReference>
<dbReference type="InterPro" id="IPR008927">
    <property type="entry name" value="6-PGluconate_DH-like_C_sf"/>
</dbReference>
<dbReference type="InterPro" id="IPR013328">
    <property type="entry name" value="6PGD_dom2"/>
</dbReference>
<dbReference type="InterPro" id="IPR006168">
    <property type="entry name" value="G3P_DH_NAD-dep"/>
</dbReference>
<dbReference type="InterPro" id="IPR006109">
    <property type="entry name" value="G3P_DH_NAD-dep_C"/>
</dbReference>
<dbReference type="InterPro" id="IPR011128">
    <property type="entry name" value="G3P_DH_NAD-dep_N"/>
</dbReference>
<dbReference type="InterPro" id="IPR036291">
    <property type="entry name" value="NAD(P)-bd_dom_sf"/>
</dbReference>
<dbReference type="NCBIfam" id="NF000939">
    <property type="entry name" value="PRK00094.1-1"/>
    <property type="match status" value="1"/>
</dbReference>
<dbReference type="NCBIfam" id="NF000940">
    <property type="entry name" value="PRK00094.1-2"/>
    <property type="match status" value="1"/>
</dbReference>
<dbReference type="NCBIfam" id="NF000942">
    <property type="entry name" value="PRK00094.1-4"/>
    <property type="match status" value="1"/>
</dbReference>
<dbReference type="PANTHER" id="PTHR11728">
    <property type="entry name" value="GLYCEROL-3-PHOSPHATE DEHYDROGENASE"/>
    <property type="match status" value="1"/>
</dbReference>
<dbReference type="PANTHER" id="PTHR11728:SF1">
    <property type="entry name" value="GLYCEROL-3-PHOSPHATE DEHYDROGENASE [NAD(+)] 2, CHLOROPLASTIC"/>
    <property type="match status" value="1"/>
</dbReference>
<dbReference type="Pfam" id="PF07479">
    <property type="entry name" value="NAD_Gly3P_dh_C"/>
    <property type="match status" value="1"/>
</dbReference>
<dbReference type="Pfam" id="PF01210">
    <property type="entry name" value="NAD_Gly3P_dh_N"/>
    <property type="match status" value="1"/>
</dbReference>
<dbReference type="PIRSF" id="PIRSF000114">
    <property type="entry name" value="Glycerol-3-P_dh"/>
    <property type="match status" value="1"/>
</dbReference>
<dbReference type="PRINTS" id="PR00077">
    <property type="entry name" value="GPDHDRGNASE"/>
</dbReference>
<dbReference type="SUPFAM" id="SSF48179">
    <property type="entry name" value="6-phosphogluconate dehydrogenase C-terminal domain-like"/>
    <property type="match status" value="1"/>
</dbReference>
<dbReference type="SUPFAM" id="SSF51735">
    <property type="entry name" value="NAD(P)-binding Rossmann-fold domains"/>
    <property type="match status" value="1"/>
</dbReference>
<dbReference type="PROSITE" id="PS00957">
    <property type="entry name" value="NAD_G3PDH"/>
    <property type="match status" value="1"/>
</dbReference>
<name>GPDA_ECOL6</name>